<dbReference type="EMBL" id="AY554164">
    <property type="protein sequence ID" value="AAS66302.1"/>
    <property type="molecule type" value="mRNA"/>
</dbReference>
<dbReference type="EMBL" id="AY554165">
    <property type="protein sequence ID" value="AAS66303.1"/>
    <property type="molecule type" value="mRNA"/>
</dbReference>
<dbReference type="EMBL" id="AL133477">
    <property type="status" value="NOT_ANNOTATED_CDS"/>
    <property type="molecule type" value="Genomic_DNA"/>
</dbReference>
<dbReference type="EMBL" id="BC126141">
    <property type="protein sequence ID" value="AAI26142.1"/>
    <property type="molecule type" value="mRNA"/>
</dbReference>
<dbReference type="EMBL" id="BK000211">
    <property type="protein sequence ID" value="DAA00067.1"/>
    <property type="molecule type" value="mRNA"/>
</dbReference>
<dbReference type="CCDS" id="CCDS6718.1">
    <molecule id="Q7RTV3-1"/>
</dbReference>
<dbReference type="RefSeq" id="NP_710162.1">
    <molecule id="Q7RTV3-1"/>
    <property type="nucleotide sequence ID" value="NM_153695.4"/>
</dbReference>
<dbReference type="SMR" id="Q7RTV3"/>
<dbReference type="BioGRID" id="128186">
    <property type="interactions" value="1"/>
</dbReference>
<dbReference type="FunCoup" id="Q7RTV3">
    <property type="interactions" value="2466"/>
</dbReference>
<dbReference type="IntAct" id="Q7RTV3">
    <property type="interactions" value="1"/>
</dbReference>
<dbReference type="STRING" id="9606.ENSP00000364405"/>
<dbReference type="GlyGen" id="Q7RTV3">
    <property type="glycosylation" value="1 site"/>
</dbReference>
<dbReference type="iPTMnet" id="Q7RTV3"/>
<dbReference type="PhosphoSitePlus" id="Q7RTV3"/>
<dbReference type="BioMuta" id="ZNF367"/>
<dbReference type="DMDM" id="74762420"/>
<dbReference type="jPOST" id="Q7RTV3"/>
<dbReference type="MassIVE" id="Q7RTV3"/>
<dbReference type="PaxDb" id="9606-ENSP00000364405"/>
<dbReference type="PeptideAtlas" id="Q7RTV3"/>
<dbReference type="ProteomicsDB" id="68913">
    <molecule id="Q7RTV3-1"/>
</dbReference>
<dbReference type="ProteomicsDB" id="68914">
    <molecule id="Q7RTV3-2"/>
</dbReference>
<dbReference type="Antibodypedia" id="14186">
    <property type="antibodies" value="93 antibodies from 16 providers"/>
</dbReference>
<dbReference type="DNASU" id="195828"/>
<dbReference type="Ensembl" id="ENST00000375256.5">
    <molecule id="Q7RTV3-1"/>
    <property type="protein sequence ID" value="ENSP00000364405.4"/>
    <property type="gene ID" value="ENSG00000165244.7"/>
</dbReference>
<dbReference type="GeneID" id="195828"/>
<dbReference type="KEGG" id="hsa:195828"/>
<dbReference type="MANE-Select" id="ENST00000375256.5">
    <property type="protein sequence ID" value="ENSP00000364405.4"/>
    <property type="RefSeq nucleotide sequence ID" value="NM_153695.4"/>
    <property type="RefSeq protein sequence ID" value="NP_710162.1"/>
</dbReference>
<dbReference type="UCSC" id="uc004awf.4">
    <molecule id="Q7RTV3-1"/>
    <property type="organism name" value="human"/>
</dbReference>
<dbReference type="AGR" id="HGNC:18320"/>
<dbReference type="CTD" id="195828"/>
<dbReference type="DisGeNET" id="195828"/>
<dbReference type="GeneCards" id="ZNF367"/>
<dbReference type="HGNC" id="HGNC:18320">
    <property type="gene designation" value="ZNF367"/>
</dbReference>
<dbReference type="HPA" id="ENSG00000165244">
    <property type="expression patterns" value="Tissue enhanced (bone)"/>
</dbReference>
<dbReference type="MIM" id="610160">
    <property type="type" value="gene"/>
</dbReference>
<dbReference type="neXtProt" id="NX_Q7RTV3"/>
<dbReference type="OpenTargets" id="ENSG00000165244"/>
<dbReference type="PharmGKB" id="PA38316"/>
<dbReference type="VEuPathDB" id="HostDB:ENSG00000165244"/>
<dbReference type="eggNOG" id="KOG1721">
    <property type="taxonomic scope" value="Eukaryota"/>
</dbReference>
<dbReference type="GeneTree" id="ENSGT00670000098074"/>
<dbReference type="HOGENOM" id="CLU_068261_0_0_1"/>
<dbReference type="InParanoid" id="Q7RTV3"/>
<dbReference type="OMA" id="NKHPHVI"/>
<dbReference type="OrthoDB" id="3437960at2759"/>
<dbReference type="PAN-GO" id="Q7RTV3">
    <property type="GO annotations" value="3 GO annotations based on evolutionary models"/>
</dbReference>
<dbReference type="PhylomeDB" id="Q7RTV3"/>
<dbReference type="TreeFam" id="TF321334"/>
<dbReference type="PathwayCommons" id="Q7RTV3"/>
<dbReference type="BioGRID-ORCS" id="195828">
    <property type="hits" value="36 hits in 1178 CRISPR screens"/>
</dbReference>
<dbReference type="GenomeRNAi" id="195828"/>
<dbReference type="Pharos" id="Q7RTV3">
    <property type="development level" value="Tbio"/>
</dbReference>
<dbReference type="PRO" id="PR:Q7RTV3"/>
<dbReference type="Proteomes" id="UP000005640">
    <property type="component" value="Chromosome 9"/>
</dbReference>
<dbReference type="RNAct" id="Q7RTV3">
    <property type="molecule type" value="protein"/>
</dbReference>
<dbReference type="Bgee" id="ENSG00000165244">
    <property type="expression patterns" value="Expressed in thymus and 127 other cell types or tissues"/>
</dbReference>
<dbReference type="GO" id="GO:0005654">
    <property type="term" value="C:nucleoplasm"/>
    <property type="evidence" value="ECO:0000314"/>
    <property type="project" value="HPA"/>
</dbReference>
<dbReference type="GO" id="GO:0005634">
    <property type="term" value="C:nucleus"/>
    <property type="evidence" value="ECO:0000314"/>
    <property type="project" value="MGI"/>
</dbReference>
<dbReference type="GO" id="GO:0003700">
    <property type="term" value="F:DNA-binding transcription factor activity"/>
    <property type="evidence" value="ECO:0000314"/>
    <property type="project" value="MGI"/>
</dbReference>
<dbReference type="GO" id="GO:0000981">
    <property type="term" value="F:DNA-binding transcription factor activity, RNA polymerase II-specific"/>
    <property type="evidence" value="ECO:0000318"/>
    <property type="project" value="GO_Central"/>
</dbReference>
<dbReference type="GO" id="GO:0000978">
    <property type="term" value="F:RNA polymerase II cis-regulatory region sequence-specific DNA binding"/>
    <property type="evidence" value="ECO:0000318"/>
    <property type="project" value="GO_Central"/>
</dbReference>
<dbReference type="GO" id="GO:0008270">
    <property type="term" value="F:zinc ion binding"/>
    <property type="evidence" value="ECO:0007669"/>
    <property type="project" value="UniProtKB-KW"/>
</dbReference>
<dbReference type="GO" id="GO:0006357">
    <property type="term" value="P:regulation of transcription by RNA polymerase II"/>
    <property type="evidence" value="ECO:0000314"/>
    <property type="project" value="MGI"/>
</dbReference>
<dbReference type="FunFam" id="3.30.160.60:FF:000535">
    <property type="entry name" value="Zinc finger protein 367"/>
    <property type="match status" value="1"/>
</dbReference>
<dbReference type="FunFam" id="3.30.160.60:FF:000474">
    <property type="entry name" value="zinc finger protein 367"/>
    <property type="match status" value="1"/>
</dbReference>
<dbReference type="Gene3D" id="3.30.160.60">
    <property type="entry name" value="Classic Zinc Finger"/>
    <property type="match status" value="2"/>
</dbReference>
<dbReference type="InterPro" id="IPR036236">
    <property type="entry name" value="Znf_C2H2_sf"/>
</dbReference>
<dbReference type="InterPro" id="IPR013087">
    <property type="entry name" value="Znf_C2H2_type"/>
</dbReference>
<dbReference type="PANTHER" id="PTHR23235">
    <property type="entry name" value="KRUEPPEL-LIKE TRANSCRIPTION FACTOR"/>
    <property type="match status" value="1"/>
</dbReference>
<dbReference type="PANTHER" id="PTHR23235:SF130">
    <property type="entry name" value="ZINC FINGER PROTEIN 367"/>
    <property type="match status" value="1"/>
</dbReference>
<dbReference type="Pfam" id="PF00096">
    <property type="entry name" value="zf-C2H2"/>
    <property type="match status" value="1"/>
</dbReference>
<dbReference type="Pfam" id="PF13912">
    <property type="entry name" value="zf-C2H2_6"/>
    <property type="match status" value="1"/>
</dbReference>
<dbReference type="SMART" id="SM00355">
    <property type="entry name" value="ZnF_C2H2"/>
    <property type="match status" value="2"/>
</dbReference>
<dbReference type="SUPFAM" id="SSF57667">
    <property type="entry name" value="beta-beta-alpha zinc fingers"/>
    <property type="match status" value="1"/>
</dbReference>
<dbReference type="PROSITE" id="PS00028">
    <property type="entry name" value="ZINC_FINGER_C2H2_1"/>
    <property type="match status" value="2"/>
</dbReference>
<dbReference type="PROSITE" id="PS50157">
    <property type="entry name" value="ZINC_FINGER_C2H2_2"/>
    <property type="match status" value="2"/>
</dbReference>
<gene>
    <name type="primary">ZNF367</name>
    <name type="synonym">ZFF29</name>
</gene>
<organism>
    <name type="scientific">Homo sapiens</name>
    <name type="common">Human</name>
    <dbReference type="NCBI Taxonomy" id="9606"/>
    <lineage>
        <taxon>Eukaryota</taxon>
        <taxon>Metazoa</taxon>
        <taxon>Chordata</taxon>
        <taxon>Craniata</taxon>
        <taxon>Vertebrata</taxon>
        <taxon>Euteleostomi</taxon>
        <taxon>Mammalia</taxon>
        <taxon>Eutheria</taxon>
        <taxon>Euarchontoglires</taxon>
        <taxon>Primates</taxon>
        <taxon>Haplorrhini</taxon>
        <taxon>Catarrhini</taxon>
        <taxon>Hominidae</taxon>
        <taxon>Homo</taxon>
    </lineage>
</organism>
<comment type="function">
    <text evidence="4">Transcriptional activator. Isoform 1 may be involved in transcriptional activation of erythroid genes.</text>
</comment>
<comment type="subcellular location">
    <subcellularLocation>
        <location evidence="4">Nucleus</location>
    </subcellularLocation>
</comment>
<comment type="alternative products">
    <event type="alternative splicing"/>
    <isoform>
        <id>Q7RTV3-1</id>
        <name>1</name>
        <name>ZFF29B</name>
        <sequence type="displayed"/>
    </isoform>
    <isoform>
        <id>Q7RTV3-2</id>
        <name>2</name>
        <name>ZFF29A</name>
        <sequence type="described" ref="VSP_024865"/>
    </isoform>
</comment>
<comment type="similarity">
    <text evidence="6">Belongs to the krueppel C2H2-type zinc-finger protein family.</text>
</comment>
<sequence>MIRGFEAPMAENPPPPPPPVIFCHDSPKRVLVSVIRTTPIKPTCGGGGEPEPPPPLIPTSPGFSDFMVYPWRWGENAHNVTLSPGAAGAAASAALPAAAAAEHSGLRGRGAPPPAASASAAASGGEDEEEASSPDSGHLKDGIRRGRPRADTVRDLINEGEHSSSRIRCNICNRVFPREKSLQAHKRTHTGERPYLCDYPDCGKAFVQSGQLKTHQRLHTGEKPFVCSENGCLSRFTHANRHCPKHPYARLKREEPTDTLSKHQAADNKAAAEWLARYWEMREQRTPTLKGKLVQKADQEQQDPLEYLQSDEEDDEKRGAQRRLQEQRERLHGALALIELANLTGAPLRQ</sequence>
<name>ZN367_HUMAN</name>
<feature type="chain" id="PRO_0000285297" description="Zinc finger protein 367">
    <location>
        <begin position="1"/>
        <end position="350"/>
    </location>
</feature>
<feature type="zinc finger region" description="C2H2-type 1" evidence="2">
    <location>
        <begin position="167"/>
        <end position="189"/>
    </location>
</feature>
<feature type="zinc finger region" description="C2H2-type 2" evidence="2">
    <location>
        <begin position="195"/>
        <end position="219"/>
    </location>
</feature>
<feature type="region of interest" description="Disordered" evidence="3">
    <location>
        <begin position="104"/>
        <end position="151"/>
    </location>
</feature>
<feature type="region of interest" description="Disordered" evidence="3">
    <location>
        <begin position="290"/>
        <end position="327"/>
    </location>
</feature>
<feature type="coiled-coil region" evidence="1">
    <location>
        <begin position="308"/>
        <end position="342"/>
    </location>
</feature>
<feature type="compositionally biased region" description="Basic and acidic residues" evidence="3">
    <location>
        <begin position="137"/>
        <end position="151"/>
    </location>
</feature>
<feature type="compositionally biased region" description="Basic and acidic residues" evidence="3">
    <location>
        <begin position="316"/>
        <end position="327"/>
    </location>
</feature>
<feature type="modified residue" description="Phosphoserine" evidence="7 8">
    <location>
        <position position="310"/>
    </location>
</feature>
<feature type="splice variant" id="VSP_024865" description="In isoform 2." evidence="5">
    <original>YWEMREQRTPTLKGKLVQKADQEQQDPLEYLQSDEEDDEKRGAQRRLQEQRERLHGALALIELANLTGAPLRQ</original>
    <variation>SGMLPLVHREDAQRGLGLCQGPGHASHFK</variation>
    <location>
        <begin position="278"/>
        <end position="350"/>
    </location>
</feature>
<protein>
    <recommendedName>
        <fullName>Zinc finger protein 367</fullName>
    </recommendedName>
    <alternativeName>
        <fullName>C2H2 zinc finger protein ZFF29</fullName>
    </alternativeName>
</protein>
<accession>Q7RTV3</accession>
<accession>Q6Q7C8</accession>
<keyword id="KW-0010">Activator</keyword>
<keyword id="KW-0025">Alternative splicing</keyword>
<keyword id="KW-0175">Coiled coil</keyword>
<keyword id="KW-0238">DNA-binding</keyword>
<keyword id="KW-0479">Metal-binding</keyword>
<keyword id="KW-0539">Nucleus</keyword>
<keyword id="KW-0597">Phosphoprotein</keyword>
<keyword id="KW-1267">Proteomics identification</keyword>
<keyword id="KW-1185">Reference proteome</keyword>
<keyword id="KW-0677">Repeat</keyword>
<keyword id="KW-0804">Transcription</keyword>
<keyword id="KW-0805">Transcription regulation</keyword>
<keyword id="KW-0862">Zinc</keyword>
<keyword id="KW-0863">Zinc-finger</keyword>
<proteinExistence type="evidence at protein level"/>
<reference key="1">
    <citation type="journal article" date="2004" name="Biochem. J.">
        <title>Molecular cloning and characterization of ZFF29: a protein containing a unique Cys2His2 zinc-finger motif.</title>
        <authorList>
            <person name="Asano H."/>
            <person name="Murate T."/>
            <person name="Naoe T."/>
            <person name="Saito H."/>
            <person name="Stamatoyannopoulos G."/>
        </authorList>
    </citation>
    <scope>NUCLEOTIDE SEQUENCE [MRNA] (ISOFORMS 1 AND 2)</scope>
    <scope>FUNCTION</scope>
    <scope>SUBCELLULAR LOCATION</scope>
    <scope>ALTERNATIVE SPLICING</scope>
    <source>
        <tissue>Fetal liver</tissue>
    </source>
</reference>
<reference key="2">
    <citation type="journal article" date="2004" name="Nature">
        <title>DNA sequence and analysis of human chromosome 9.</title>
        <authorList>
            <person name="Humphray S.J."/>
            <person name="Oliver K."/>
            <person name="Hunt A.R."/>
            <person name="Plumb R.W."/>
            <person name="Loveland J.E."/>
            <person name="Howe K.L."/>
            <person name="Andrews T.D."/>
            <person name="Searle S."/>
            <person name="Hunt S.E."/>
            <person name="Scott C.E."/>
            <person name="Jones M.C."/>
            <person name="Ainscough R."/>
            <person name="Almeida J.P."/>
            <person name="Ambrose K.D."/>
            <person name="Ashwell R.I.S."/>
            <person name="Babbage A.K."/>
            <person name="Babbage S."/>
            <person name="Bagguley C.L."/>
            <person name="Bailey J."/>
            <person name="Banerjee R."/>
            <person name="Barker D.J."/>
            <person name="Barlow K.F."/>
            <person name="Bates K."/>
            <person name="Beasley H."/>
            <person name="Beasley O."/>
            <person name="Bird C.P."/>
            <person name="Bray-Allen S."/>
            <person name="Brown A.J."/>
            <person name="Brown J.Y."/>
            <person name="Burford D."/>
            <person name="Burrill W."/>
            <person name="Burton J."/>
            <person name="Carder C."/>
            <person name="Carter N.P."/>
            <person name="Chapman J.C."/>
            <person name="Chen Y."/>
            <person name="Clarke G."/>
            <person name="Clark S.Y."/>
            <person name="Clee C.M."/>
            <person name="Clegg S."/>
            <person name="Collier R.E."/>
            <person name="Corby N."/>
            <person name="Crosier M."/>
            <person name="Cummings A.T."/>
            <person name="Davies J."/>
            <person name="Dhami P."/>
            <person name="Dunn M."/>
            <person name="Dutta I."/>
            <person name="Dyer L.W."/>
            <person name="Earthrowl M.E."/>
            <person name="Faulkner L."/>
            <person name="Fleming C.J."/>
            <person name="Frankish A."/>
            <person name="Frankland J.A."/>
            <person name="French L."/>
            <person name="Fricker D.G."/>
            <person name="Garner P."/>
            <person name="Garnett J."/>
            <person name="Ghori J."/>
            <person name="Gilbert J.G.R."/>
            <person name="Glison C."/>
            <person name="Grafham D.V."/>
            <person name="Gribble S."/>
            <person name="Griffiths C."/>
            <person name="Griffiths-Jones S."/>
            <person name="Grocock R."/>
            <person name="Guy J."/>
            <person name="Hall R.E."/>
            <person name="Hammond S."/>
            <person name="Harley J.L."/>
            <person name="Harrison E.S.I."/>
            <person name="Hart E.A."/>
            <person name="Heath P.D."/>
            <person name="Henderson C.D."/>
            <person name="Hopkins B.L."/>
            <person name="Howard P.J."/>
            <person name="Howden P.J."/>
            <person name="Huckle E."/>
            <person name="Johnson C."/>
            <person name="Johnson D."/>
            <person name="Joy A.A."/>
            <person name="Kay M."/>
            <person name="Keenan S."/>
            <person name="Kershaw J.K."/>
            <person name="Kimberley A.M."/>
            <person name="King A."/>
            <person name="Knights A."/>
            <person name="Laird G.K."/>
            <person name="Langford C."/>
            <person name="Lawlor S."/>
            <person name="Leongamornlert D.A."/>
            <person name="Leversha M."/>
            <person name="Lloyd C."/>
            <person name="Lloyd D.M."/>
            <person name="Lovell J."/>
            <person name="Martin S."/>
            <person name="Mashreghi-Mohammadi M."/>
            <person name="Matthews L."/>
            <person name="McLaren S."/>
            <person name="McLay K.E."/>
            <person name="McMurray A."/>
            <person name="Milne S."/>
            <person name="Nickerson T."/>
            <person name="Nisbett J."/>
            <person name="Nordsiek G."/>
            <person name="Pearce A.V."/>
            <person name="Peck A.I."/>
            <person name="Porter K.M."/>
            <person name="Pandian R."/>
            <person name="Pelan S."/>
            <person name="Phillimore B."/>
            <person name="Povey S."/>
            <person name="Ramsey Y."/>
            <person name="Rand V."/>
            <person name="Scharfe M."/>
            <person name="Sehra H.K."/>
            <person name="Shownkeen R."/>
            <person name="Sims S.K."/>
            <person name="Skuce C.D."/>
            <person name="Smith M."/>
            <person name="Steward C.A."/>
            <person name="Swarbreck D."/>
            <person name="Sycamore N."/>
            <person name="Tester J."/>
            <person name="Thorpe A."/>
            <person name="Tracey A."/>
            <person name="Tromans A."/>
            <person name="Thomas D.W."/>
            <person name="Wall M."/>
            <person name="Wallis J.M."/>
            <person name="West A.P."/>
            <person name="Whitehead S.L."/>
            <person name="Willey D.L."/>
            <person name="Williams S.A."/>
            <person name="Wilming L."/>
            <person name="Wray P.W."/>
            <person name="Young L."/>
            <person name="Ashurst J.L."/>
            <person name="Coulson A."/>
            <person name="Blocker H."/>
            <person name="Durbin R.M."/>
            <person name="Sulston J.E."/>
            <person name="Hubbard T."/>
            <person name="Jackson M.J."/>
            <person name="Bentley D.R."/>
            <person name="Beck S."/>
            <person name="Rogers J."/>
            <person name="Dunham I."/>
        </authorList>
    </citation>
    <scope>NUCLEOTIDE SEQUENCE [LARGE SCALE GENOMIC DNA]</scope>
</reference>
<reference key="3">
    <citation type="journal article" date="2004" name="Genome Res.">
        <title>The status, quality, and expansion of the NIH full-length cDNA project: the Mammalian Gene Collection (MGC).</title>
        <authorList>
            <consortium name="The MGC Project Team"/>
        </authorList>
    </citation>
    <scope>NUCLEOTIDE SEQUENCE [LARGE SCALE MRNA] (ISOFORM 1)</scope>
</reference>
<reference key="4">
    <citation type="journal article" date="2002" name="Gene">
        <title>Fugu and human sequence comparison identifies novel human genes and conserved non-coding sequences.</title>
        <authorList>
            <person name="Gilligan P."/>
            <person name="Brenner S."/>
            <person name="Venkatesh B."/>
        </authorList>
    </citation>
    <scope>IDENTIFICATION (ISOFORM 1)</scope>
</reference>
<reference key="5">
    <citation type="journal article" date="2008" name="Proc. Natl. Acad. Sci. U.S.A.">
        <title>A quantitative atlas of mitotic phosphorylation.</title>
        <authorList>
            <person name="Dephoure N."/>
            <person name="Zhou C."/>
            <person name="Villen J."/>
            <person name="Beausoleil S.A."/>
            <person name="Bakalarski C.E."/>
            <person name="Elledge S.J."/>
            <person name="Gygi S.P."/>
        </authorList>
    </citation>
    <scope>PHOSPHORYLATION [LARGE SCALE ANALYSIS] AT SER-310</scope>
    <scope>IDENTIFICATION BY MASS SPECTROMETRY [LARGE SCALE ANALYSIS]</scope>
    <source>
        <tissue>Cervix carcinoma</tissue>
    </source>
</reference>
<reference key="6">
    <citation type="journal article" date="2013" name="J. Proteome Res.">
        <title>Toward a comprehensive characterization of a human cancer cell phosphoproteome.</title>
        <authorList>
            <person name="Zhou H."/>
            <person name="Di Palma S."/>
            <person name="Preisinger C."/>
            <person name="Peng M."/>
            <person name="Polat A.N."/>
            <person name="Heck A.J."/>
            <person name="Mohammed S."/>
        </authorList>
    </citation>
    <scope>PHOSPHORYLATION [LARGE SCALE ANALYSIS] AT SER-310</scope>
    <scope>IDENTIFICATION BY MASS SPECTROMETRY [LARGE SCALE ANALYSIS]</scope>
    <source>
        <tissue>Cervix carcinoma</tissue>
        <tissue>Erythroleukemia</tissue>
    </source>
</reference>
<evidence type="ECO:0000255" key="1"/>
<evidence type="ECO:0000255" key="2">
    <source>
        <dbReference type="PROSITE-ProRule" id="PRU00042"/>
    </source>
</evidence>
<evidence type="ECO:0000256" key="3">
    <source>
        <dbReference type="SAM" id="MobiDB-lite"/>
    </source>
</evidence>
<evidence type="ECO:0000269" key="4">
    <source>
    </source>
</evidence>
<evidence type="ECO:0000303" key="5">
    <source>
    </source>
</evidence>
<evidence type="ECO:0000305" key="6"/>
<evidence type="ECO:0007744" key="7">
    <source>
    </source>
</evidence>
<evidence type="ECO:0007744" key="8">
    <source>
    </source>
</evidence>